<feature type="chain" id="PRO_0000055357" description="Protein-export protein SecB">
    <location>
        <begin position="1"/>
        <end position="154"/>
    </location>
</feature>
<comment type="function">
    <text evidence="1">One of the proteins required for the normal export of preproteins out of the cell cytoplasm. It is a molecular chaperone that binds to a subset of precursor proteins, maintaining them in a translocation-competent state. It also specifically binds to its receptor SecA.</text>
</comment>
<comment type="subunit">
    <text evidence="1">Homotetramer, a dimer of dimers. One homotetramer interacts with 1 SecA dimer.</text>
</comment>
<comment type="subcellular location">
    <subcellularLocation>
        <location evidence="1">Cytoplasm</location>
    </subcellularLocation>
</comment>
<comment type="similarity">
    <text evidence="1">Belongs to the SecB family.</text>
</comment>
<reference key="1">
    <citation type="journal article" date="1992" name="Gene">
        <title>Sequence analysis of a DNA fragment from Buchnera aphidicola (an endosymbiont of aphids) containing genes homologous to dnaG, rpoD, cysE, and secB.</title>
        <authorList>
            <person name="Lai C.-Y."/>
            <person name="Baumann P."/>
        </authorList>
    </citation>
    <scope>NUCLEOTIDE SEQUENCE [GENOMIC DNA]</scope>
</reference>
<reference key="2">
    <citation type="journal article" date="2002" name="Science">
        <title>50 million years of genomic stasis in endosymbiotic bacteria.</title>
        <authorList>
            <person name="Tamas I."/>
            <person name="Klasson L."/>
            <person name="Canbaeck B."/>
            <person name="Naeslund A.K."/>
            <person name="Eriksson A.-S."/>
            <person name="Wernegreen J.J."/>
            <person name="Sandstroem J.P."/>
            <person name="Moran N.A."/>
            <person name="Andersson S.G.E."/>
        </authorList>
    </citation>
    <scope>NUCLEOTIDE SEQUENCE [LARGE SCALE GENOMIC DNA]</scope>
    <source>
        <strain>Sg</strain>
    </source>
</reference>
<proteinExistence type="inferred from homology"/>
<accession>P32002</accession>
<protein>
    <recommendedName>
        <fullName evidence="1">Protein-export protein SecB</fullName>
    </recommendedName>
</protein>
<dbReference type="EMBL" id="M90644">
    <property type="protein sequence ID" value="AAA73231.1"/>
    <property type="molecule type" value="Genomic_DNA"/>
</dbReference>
<dbReference type="EMBL" id="AE013218">
    <property type="protein sequence ID" value="AAM67621.1"/>
    <property type="molecule type" value="Genomic_DNA"/>
</dbReference>
<dbReference type="PIR" id="JC1292">
    <property type="entry name" value="JC1292"/>
</dbReference>
<dbReference type="RefSeq" id="WP_011053587.1">
    <property type="nucleotide sequence ID" value="NC_004061.1"/>
</dbReference>
<dbReference type="SMR" id="P32002"/>
<dbReference type="STRING" id="198804.BUsg_050"/>
<dbReference type="GeneID" id="93003517"/>
<dbReference type="KEGG" id="bas:BUsg_050"/>
<dbReference type="eggNOG" id="COG1952">
    <property type="taxonomic scope" value="Bacteria"/>
</dbReference>
<dbReference type="HOGENOM" id="CLU_111574_1_0_6"/>
<dbReference type="Proteomes" id="UP000000416">
    <property type="component" value="Chromosome"/>
</dbReference>
<dbReference type="GO" id="GO:0005737">
    <property type="term" value="C:cytoplasm"/>
    <property type="evidence" value="ECO:0007669"/>
    <property type="project" value="UniProtKB-SubCell"/>
</dbReference>
<dbReference type="GO" id="GO:0051082">
    <property type="term" value="F:unfolded protein binding"/>
    <property type="evidence" value="ECO:0007669"/>
    <property type="project" value="InterPro"/>
</dbReference>
<dbReference type="GO" id="GO:0006457">
    <property type="term" value="P:protein folding"/>
    <property type="evidence" value="ECO:0007669"/>
    <property type="project" value="UniProtKB-UniRule"/>
</dbReference>
<dbReference type="GO" id="GO:0051262">
    <property type="term" value="P:protein tetramerization"/>
    <property type="evidence" value="ECO:0007669"/>
    <property type="project" value="InterPro"/>
</dbReference>
<dbReference type="GO" id="GO:0015031">
    <property type="term" value="P:protein transport"/>
    <property type="evidence" value="ECO:0007669"/>
    <property type="project" value="UniProtKB-UniRule"/>
</dbReference>
<dbReference type="Gene3D" id="3.10.420.10">
    <property type="entry name" value="SecB-like"/>
    <property type="match status" value="1"/>
</dbReference>
<dbReference type="HAMAP" id="MF_00821">
    <property type="entry name" value="SecB"/>
    <property type="match status" value="1"/>
</dbReference>
<dbReference type="InterPro" id="IPR003708">
    <property type="entry name" value="SecB"/>
</dbReference>
<dbReference type="InterPro" id="IPR035958">
    <property type="entry name" value="SecB-like_sf"/>
</dbReference>
<dbReference type="NCBIfam" id="NF004393">
    <property type="entry name" value="PRK05751.1-4"/>
    <property type="match status" value="1"/>
</dbReference>
<dbReference type="NCBIfam" id="TIGR00809">
    <property type="entry name" value="secB"/>
    <property type="match status" value="1"/>
</dbReference>
<dbReference type="PANTHER" id="PTHR36918">
    <property type="match status" value="1"/>
</dbReference>
<dbReference type="PANTHER" id="PTHR36918:SF1">
    <property type="entry name" value="PROTEIN-EXPORT PROTEIN SECB"/>
    <property type="match status" value="1"/>
</dbReference>
<dbReference type="Pfam" id="PF02556">
    <property type="entry name" value="SecB"/>
    <property type="match status" value="1"/>
</dbReference>
<dbReference type="PRINTS" id="PR01594">
    <property type="entry name" value="SECBCHAPRONE"/>
</dbReference>
<dbReference type="SUPFAM" id="SSF54611">
    <property type="entry name" value="SecB-like"/>
    <property type="match status" value="1"/>
</dbReference>
<gene>
    <name evidence="1" type="primary">secB</name>
    <name type="ordered locus">BUsg_050</name>
</gene>
<organism>
    <name type="scientific">Buchnera aphidicola subsp. Schizaphis graminum (strain Sg)</name>
    <dbReference type="NCBI Taxonomy" id="198804"/>
    <lineage>
        <taxon>Bacteria</taxon>
        <taxon>Pseudomonadati</taxon>
        <taxon>Pseudomonadota</taxon>
        <taxon>Gammaproteobacteria</taxon>
        <taxon>Enterobacterales</taxon>
        <taxon>Erwiniaceae</taxon>
        <taxon>Buchnera</taxon>
    </lineage>
</organism>
<name>SECB_BUCAP</name>
<keyword id="KW-0143">Chaperone</keyword>
<keyword id="KW-0963">Cytoplasm</keyword>
<keyword id="KW-0653">Protein transport</keyword>
<keyword id="KW-0811">Translocation</keyword>
<keyword id="KW-0813">Transport</keyword>
<sequence>MSEEKLKKKSFEIQRIYIRDASFEAPNTPNIFHKKWDPEIKFNLSTVSKKLKPNIFETNLQVRVIVKSEENLVFLCDVHQVGIFFISCLDEQELKHCLGSYCPNILFPYARTCISSLVSYGSFPQLNLSPIDFDDIFCKNLKSKRNNFYQKENI</sequence>
<evidence type="ECO:0000255" key="1">
    <source>
        <dbReference type="HAMAP-Rule" id="MF_00821"/>
    </source>
</evidence>